<organism>
    <name type="scientific">Arabidopsis thaliana</name>
    <name type="common">Mouse-ear cress</name>
    <dbReference type="NCBI Taxonomy" id="3702"/>
    <lineage>
        <taxon>Eukaryota</taxon>
        <taxon>Viridiplantae</taxon>
        <taxon>Streptophyta</taxon>
        <taxon>Embryophyta</taxon>
        <taxon>Tracheophyta</taxon>
        <taxon>Spermatophyta</taxon>
        <taxon>Magnoliopsida</taxon>
        <taxon>eudicotyledons</taxon>
        <taxon>Gunneridae</taxon>
        <taxon>Pentapetalae</taxon>
        <taxon>rosids</taxon>
        <taxon>malvids</taxon>
        <taxon>Brassicales</taxon>
        <taxon>Brassicaceae</taxon>
        <taxon>Camelineae</taxon>
        <taxon>Arabidopsis</taxon>
    </lineage>
</organism>
<name>KCS7_ARATH</name>
<dbReference type="EC" id="2.3.1.199" evidence="6"/>
<dbReference type="EMBL" id="AC016972">
    <property type="protein sequence ID" value="AAG51695.1"/>
    <property type="molecule type" value="Genomic_DNA"/>
</dbReference>
<dbReference type="EMBL" id="CP002684">
    <property type="protein sequence ID" value="AEE35167.1"/>
    <property type="molecule type" value="Genomic_DNA"/>
</dbReference>
<dbReference type="EMBL" id="BT015084">
    <property type="protein sequence ID" value="AAT71956.1"/>
    <property type="molecule type" value="mRNA"/>
</dbReference>
<dbReference type="PIR" id="C96736">
    <property type="entry name" value="C96736"/>
</dbReference>
<dbReference type="RefSeq" id="NP_177272.1">
    <property type="nucleotide sequence ID" value="NM_105785.2"/>
</dbReference>
<dbReference type="SMR" id="Q9C992"/>
<dbReference type="FunCoup" id="Q9C992">
    <property type="interactions" value="202"/>
</dbReference>
<dbReference type="STRING" id="3702.Q9C992"/>
<dbReference type="iPTMnet" id="Q9C992"/>
<dbReference type="PaxDb" id="3702-AT1G71160.1"/>
<dbReference type="ProteomicsDB" id="247319"/>
<dbReference type="EnsemblPlants" id="AT1G71160.1">
    <property type="protein sequence ID" value="AT1G71160.1"/>
    <property type="gene ID" value="AT1G71160"/>
</dbReference>
<dbReference type="GeneID" id="843456"/>
<dbReference type="Gramene" id="AT1G71160.1">
    <property type="protein sequence ID" value="AT1G71160.1"/>
    <property type="gene ID" value="AT1G71160"/>
</dbReference>
<dbReference type="KEGG" id="ath:AT1G71160"/>
<dbReference type="Araport" id="AT1G71160"/>
<dbReference type="TAIR" id="AT1G71160">
    <property type="gene designation" value="KCS7"/>
</dbReference>
<dbReference type="eggNOG" id="ENOG502QQXN">
    <property type="taxonomic scope" value="Eukaryota"/>
</dbReference>
<dbReference type="HOGENOM" id="CLU_013238_2_1_1"/>
<dbReference type="InParanoid" id="Q9C992"/>
<dbReference type="OMA" id="FFKPRCI"/>
<dbReference type="PhylomeDB" id="Q9C992"/>
<dbReference type="BioCyc" id="ARA:AT1G71160-MONOMER"/>
<dbReference type="UniPathway" id="UPA00094"/>
<dbReference type="PRO" id="PR:Q9C992"/>
<dbReference type="Proteomes" id="UP000006548">
    <property type="component" value="Chromosome 1"/>
</dbReference>
<dbReference type="ExpressionAtlas" id="Q9C992">
    <property type="expression patterns" value="baseline and differential"/>
</dbReference>
<dbReference type="GO" id="GO:0016020">
    <property type="term" value="C:membrane"/>
    <property type="evidence" value="ECO:0007669"/>
    <property type="project" value="UniProtKB-SubCell"/>
</dbReference>
<dbReference type="GO" id="GO:0009922">
    <property type="term" value="F:fatty acid elongase activity"/>
    <property type="evidence" value="ECO:0007669"/>
    <property type="project" value="UniProtKB-EC"/>
</dbReference>
<dbReference type="GO" id="GO:0006633">
    <property type="term" value="P:fatty acid biosynthetic process"/>
    <property type="evidence" value="ECO:0007669"/>
    <property type="project" value="UniProtKB-UniPathway"/>
</dbReference>
<dbReference type="CDD" id="cd00831">
    <property type="entry name" value="CHS_like"/>
    <property type="match status" value="1"/>
</dbReference>
<dbReference type="Gene3D" id="3.40.47.10">
    <property type="match status" value="1"/>
</dbReference>
<dbReference type="InterPro" id="IPR012392">
    <property type="entry name" value="3-ktacl-CoA_syn"/>
</dbReference>
<dbReference type="InterPro" id="IPR013747">
    <property type="entry name" value="ACP_syn_III_C"/>
</dbReference>
<dbReference type="InterPro" id="IPR013601">
    <property type="entry name" value="FAE1_typ3_polyketide_synth"/>
</dbReference>
<dbReference type="InterPro" id="IPR016039">
    <property type="entry name" value="Thiolase-like"/>
</dbReference>
<dbReference type="PANTHER" id="PTHR31561">
    <property type="entry name" value="3-KETOACYL-COA SYNTHASE"/>
    <property type="match status" value="1"/>
</dbReference>
<dbReference type="Pfam" id="PF08541">
    <property type="entry name" value="ACP_syn_III_C"/>
    <property type="match status" value="1"/>
</dbReference>
<dbReference type="Pfam" id="PF08392">
    <property type="entry name" value="FAE1_CUT1_RppA"/>
    <property type="match status" value="1"/>
</dbReference>
<dbReference type="PIRSF" id="PIRSF036417">
    <property type="entry name" value="3-ktacl-CoA_syn"/>
    <property type="match status" value="1"/>
</dbReference>
<dbReference type="SUPFAM" id="SSF53901">
    <property type="entry name" value="Thiolase-like"/>
    <property type="match status" value="2"/>
</dbReference>
<gene>
    <name evidence="5" type="primary">KCS7</name>
    <name evidence="7" type="ordered locus">At1g71160</name>
    <name evidence="8" type="ORF">F23N20.15</name>
</gene>
<protein>
    <recommendedName>
        <fullName evidence="5">3-ketoacyl-CoA synthase 7</fullName>
        <shortName evidence="5">KCS-7</shortName>
        <ecNumber evidence="6">2.3.1.199</ecNumber>
    </recommendedName>
    <alternativeName>
        <fullName evidence="5">Very long-chain fatty acid condensing enzyme 7</fullName>
        <shortName evidence="5">VLCFA condensing enzyme 7</shortName>
    </alternativeName>
</protein>
<evidence type="ECO:0000250" key="1">
    <source>
        <dbReference type="UniProtKB" id="Q38860"/>
    </source>
</evidence>
<evidence type="ECO:0000255" key="2"/>
<evidence type="ECO:0000269" key="3">
    <source>
    </source>
</evidence>
<evidence type="ECO:0000269" key="4">
    <source>
    </source>
</evidence>
<evidence type="ECO:0000303" key="5">
    <source>
    </source>
</evidence>
<evidence type="ECO:0000305" key="6"/>
<evidence type="ECO:0000312" key="7">
    <source>
        <dbReference type="Araport" id="AT1G71160"/>
    </source>
</evidence>
<evidence type="ECO:0000312" key="8">
    <source>
        <dbReference type="EMBL" id="AAG51695.1"/>
    </source>
</evidence>
<keyword id="KW-0012">Acyltransferase</keyword>
<keyword id="KW-0472">Membrane</keyword>
<keyword id="KW-1185">Reference proteome</keyword>
<keyword id="KW-0808">Transferase</keyword>
<keyword id="KW-0812">Transmembrane</keyword>
<keyword id="KW-1133">Transmembrane helix</keyword>
<feature type="chain" id="PRO_0000249099" description="3-ketoacyl-CoA synthase 7">
    <location>
        <begin position="1"/>
        <end position="460"/>
    </location>
</feature>
<feature type="transmembrane region" description="Helical" evidence="2">
    <location>
        <begin position="21"/>
        <end position="41"/>
    </location>
</feature>
<feature type="domain" description="FAE" evidence="2">
    <location>
        <begin position="38"/>
        <end position="328"/>
    </location>
</feature>
<feature type="active site" evidence="1">
    <location>
        <position position="183"/>
    </location>
</feature>
<feature type="active site" evidence="1">
    <location>
        <position position="262"/>
    </location>
</feature>
<feature type="active site" evidence="1">
    <location>
        <position position="345"/>
    </location>
</feature>
<feature type="active site" evidence="1">
    <location>
        <position position="349"/>
    </location>
</feature>
<feature type="active site" evidence="1">
    <location>
        <position position="382"/>
    </location>
</feature>
<comment type="catalytic activity">
    <reaction evidence="6">
        <text>a very-long-chain acyl-CoA + malonyl-CoA + H(+) = a very-long-chain 3-oxoacyl-CoA + CO2 + CoA</text>
        <dbReference type="Rhea" id="RHEA:32727"/>
        <dbReference type="ChEBI" id="CHEBI:15378"/>
        <dbReference type="ChEBI" id="CHEBI:16526"/>
        <dbReference type="ChEBI" id="CHEBI:57287"/>
        <dbReference type="ChEBI" id="CHEBI:57384"/>
        <dbReference type="ChEBI" id="CHEBI:90725"/>
        <dbReference type="ChEBI" id="CHEBI:90736"/>
        <dbReference type="EC" id="2.3.1.199"/>
    </reaction>
</comment>
<comment type="pathway">
    <text>Lipid metabolism; fatty acid biosynthesis.</text>
</comment>
<comment type="subcellular location">
    <subcellularLocation>
        <location evidence="2">Membrane</location>
        <topology evidence="2">Single-pass membrane protein</topology>
    </subcellularLocation>
</comment>
<comment type="tissue specificity">
    <text evidence="4">Expressed in flowers.</text>
</comment>
<comment type="induction">
    <text evidence="3">Repressed by herbicides such as flufenacet and benfuresate.</text>
</comment>
<comment type="similarity">
    <text evidence="6">Belongs to the thiolase-like superfamily. Chalcone/stilbene synthases family.</text>
</comment>
<reference key="1">
    <citation type="journal article" date="2000" name="Nature">
        <title>Sequence and analysis of chromosome 1 of the plant Arabidopsis thaliana.</title>
        <authorList>
            <person name="Theologis A."/>
            <person name="Ecker J.R."/>
            <person name="Palm C.J."/>
            <person name="Federspiel N.A."/>
            <person name="Kaul S."/>
            <person name="White O."/>
            <person name="Alonso J."/>
            <person name="Altafi H."/>
            <person name="Araujo R."/>
            <person name="Bowman C.L."/>
            <person name="Brooks S.Y."/>
            <person name="Buehler E."/>
            <person name="Chan A."/>
            <person name="Chao Q."/>
            <person name="Chen H."/>
            <person name="Cheuk R.F."/>
            <person name="Chin C.W."/>
            <person name="Chung M.K."/>
            <person name="Conn L."/>
            <person name="Conway A.B."/>
            <person name="Conway A.R."/>
            <person name="Creasy T.H."/>
            <person name="Dewar K."/>
            <person name="Dunn P."/>
            <person name="Etgu P."/>
            <person name="Feldblyum T.V."/>
            <person name="Feng J.-D."/>
            <person name="Fong B."/>
            <person name="Fujii C.Y."/>
            <person name="Gill J.E."/>
            <person name="Goldsmith A.D."/>
            <person name="Haas B."/>
            <person name="Hansen N.F."/>
            <person name="Hughes B."/>
            <person name="Huizar L."/>
            <person name="Hunter J.L."/>
            <person name="Jenkins J."/>
            <person name="Johnson-Hopson C."/>
            <person name="Khan S."/>
            <person name="Khaykin E."/>
            <person name="Kim C.J."/>
            <person name="Koo H.L."/>
            <person name="Kremenetskaia I."/>
            <person name="Kurtz D.B."/>
            <person name="Kwan A."/>
            <person name="Lam B."/>
            <person name="Langin-Hooper S."/>
            <person name="Lee A."/>
            <person name="Lee J.M."/>
            <person name="Lenz C.A."/>
            <person name="Li J.H."/>
            <person name="Li Y.-P."/>
            <person name="Lin X."/>
            <person name="Liu S.X."/>
            <person name="Liu Z.A."/>
            <person name="Luros J.S."/>
            <person name="Maiti R."/>
            <person name="Marziali A."/>
            <person name="Militscher J."/>
            <person name="Miranda M."/>
            <person name="Nguyen M."/>
            <person name="Nierman W.C."/>
            <person name="Osborne B.I."/>
            <person name="Pai G."/>
            <person name="Peterson J."/>
            <person name="Pham P.K."/>
            <person name="Rizzo M."/>
            <person name="Rooney T."/>
            <person name="Rowley D."/>
            <person name="Sakano H."/>
            <person name="Salzberg S.L."/>
            <person name="Schwartz J.R."/>
            <person name="Shinn P."/>
            <person name="Southwick A.M."/>
            <person name="Sun H."/>
            <person name="Tallon L.J."/>
            <person name="Tambunga G."/>
            <person name="Toriumi M.J."/>
            <person name="Town C.D."/>
            <person name="Utterback T."/>
            <person name="Van Aken S."/>
            <person name="Vaysberg M."/>
            <person name="Vysotskaia V.S."/>
            <person name="Walker M."/>
            <person name="Wu D."/>
            <person name="Yu G."/>
            <person name="Fraser C.M."/>
            <person name="Venter J.C."/>
            <person name="Davis R.W."/>
        </authorList>
    </citation>
    <scope>NUCLEOTIDE SEQUENCE [LARGE SCALE GENOMIC DNA]</scope>
    <source>
        <strain>cv. Columbia</strain>
    </source>
</reference>
<reference key="2">
    <citation type="journal article" date="2017" name="Plant J.">
        <title>Araport11: a complete reannotation of the Arabidopsis thaliana reference genome.</title>
        <authorList>
            <person name="Cheng C.Y."/>
            <person name="Krishnakumar V."/>
            <person name="Chan A.P."/>
            <person name="Thibaud-Nissen F."/>
            <person name="Schobel S."/>
            <person name="Town C.D."/>
        </authorList>
    </citation>
    <scope>GENOME REANNOTATION</scope>
    <source>
        <strain>cv. Columbia</strain>
    </source>
</reference>
<reference key="3">
    <citation type="submission" date="2004-07" db="EMBL/GenBank/DDBJ databases">
        <title>Arabidopsis ORF clones.</title>
        <authorList>
            <person name="Cheuk R.F."/>
            <person name="Chen H."/>
            <person name="Kim C.J."/>
            <person name="Shinn P."/>
            <person name="Ecker J.R."/>
        </authorList>
    </citation>
    <scope>NUCLEOTIDE SEQUENCE [LARGE SCALE MRNA]</scope>
    <source>
        <strain>cv. Columbia</strain>
    </source>
</reference>
<reference key="4">
    <citation type="journal article" date="2003" name="Pest Manag. Sci.">
        <title>Flufenacet herbicide treatment phenocopies the fiddlehead mutant in Arabidopsis thaliana.</title>
        <authorList>
            <person name="Lechelt-Kunze C."/>
            <person name="Meissner R.C."/>
            <person name="Drewes M."/>
            <person name="Tietjen K."/>
        </authorList>
    </citation>
    <scope>INDUCTION</scope>
    <scope>GENE FAMILY</scope>
</reference>
<reference key="5">
    <citation type="journal article" date="2008" name="Plant Mol. Biol.">
        <title>The VLCFA elongase gene family in Arabidopsis thaliana: phylogenetic analysis, 3D modelling and expression profiling.</title>
        <authorList>
            <person name="Joubes J."/>
            <person name="Raffaele S."/>
            <person name="Bourdenx B."/>
            <person name="Garcia C."/>
            <person name="Laroche-Traineau J."/>
            <person name="Moreau P."/>
            <person name="Domergue F."/>
            <person name="Lessire R."/>
        </authorList>
    </citation>
    <scope>GENE FAMILY</scope>
    <scope>NOMENCLATURE</scope>
    <scope>3D-STRUCTURE MODELING</scope>
    <scope>TISSUE SPECIFICITY</scope>
</reference>
<sequence>MESSFHFINEALLITQTFITFHQFLVASACVLIAVFGYYFFKPRCIIYLIDFSCYQPPDFLRAPVSNFIEHLTISGVFDQESLDLQQKILERSGISDDASVPATVHEIPPNASISAAREETHEILFAIVQDLFSKHEIDPKSIDILVSNCSLFCPSPSITSMIINKFGMRSDIKSFSLSGMGCSAGILSVNLVKDLMKIHGDSLALVLSMEAVSPNGYRGKCKSMLIANTIFRMGGAAILLSNRKQDSHKAKYKLQHIIRTHVGSDTESYESVMQQVDEEGKVGVALSKQLVRVASKALKINVVQLGPRVLPYSEQLKYIISFIQRKWGMHKEIYTPNFKKAFEHFCIHAGGRAIIEGVEKHLKLDKEDVEASRSTLYRYGNTSSSSLWYELQYLEAKGRMKMGDKVWQIGFGSGFKANSAVWKCISEIDSRGRNAWSDRIHLYPVCGDTSSALKTELLS</sequence>
<accession>Q9C992</accession>
<proteinExistence type="evidence at transcript level"/>